<evidence type="ECO:0000255" key="1">
    <source>
        <dbReference type="HAMAP-Rule" id="MF_00382"/>
    </source>
</evidence>
<evidence type="ECO:0000305" key="2"/>
<sequence>MPRVKGGTVTRQRRKRVLKLAKGYYGSKRTLFKTAKQQVIKSGQYAYRDRRQKKRDFRKLWITRINAAARMHDLSYSKLMHGLKVAGIDINRKMLSDLAISDEKAFAQLVSQAKEALK</sequence>
<protein>
    <recommendedName>
        <fullName evidence="1">Large ribosomal subunit protein bL20</fullName>
    </recommendedName>
    <alternativeName>
        <fullName evidence="2">50S ribosomal protein L20</fullName>
    </alternativeName>
</protein>
<dbReference type="EMBL" id="BA000028">
    <property type="protein sequence ID" value="BAC14106.1"/>
    <property type="molecule type" value="Genomic_DNA"/>
</dbReference>
<dbReference type="RefSeq" id="WP_011066544.1">
    <property type="nucleotide sequence ID" value="NC_004193.1"/>
</dbReference>
<dbReference type="SMR" id="Q8EPF7"/>
<dbReference type="STRING" id="221109.gene:10734398"/>
<dbReference type="KEGG" id="oih:OB2150"/>
<dbReference type="eggNOG" id="COG0292">
    <property type="taxonomic scope" value="Bacteria"/>
</dbReference>
<dbReference type="HOGENOM" id="CLU_123265_0_1_9"/>
<dbReference type="OrthoDB" id="9808966at2"/>
<dbReference type="PhylomeDB" id="Q8EPF7"/>
<dbReference type="Proteomes" id="UP000000822">
    <property type="component" value="Chromosome"/>
</dbReference>
<dbReference type="GO" id="GO:1990904">
    <property type="term" value="C:ribonucleoprotein complex"/>
    <property type="evidence" value="ECO:0007669"/>
    <property type="project" value="UniProtKB-KW"/>
</dbReference>
<dbReference type="GO" id="GO:0005840">
    <property type="term" value="C:ribosome"/>
    <property type="evidence" value="ECO:0007669"/>
    <property type="project" value="UniProtKB-KW"/>
</dbReference>
<dbReference type="GO" id="GO:0019843">
    <property type="term" value="F:rRNA binding"/>
    <property type="evidence" value="ECO:0007669"/>
    <property type="project" value="UniProtKB-UniRule"/>
</dbReference>
<dbReference type="GO" id="GO:0003735">
    <property type="term" value="F:structural constituent of ribosome"/>
    <property type="evidence" value="ECO:0007669"/>
    <property type="project" value="InterPro"/>
</dbReference>
<dbReference type="GO" id="GO:0000027">
    <property type="term" value="P:ribosomal large subunit assembly"/>
    <property type="evidence" value="ECO:0007669"/>
    <property type="project" value="UniProtKB-UniRule"/>
</dbReference>
<dbReference type="GO" id="GO:0006412">
    <property type="term" value="P:translation"/>
    <property type="evidence" value="ECO:0007669"/>
    <property type="project" value="InterPro"/>
</dbReference>
<dbReference type="CDD" id="cd07026">
    <property type="entry name" value="Ribosomal_L20"/>
    <property type="match status" value="1"/>
</dbReference>
<dbReference type="FunFam" id="1.10.1900.20:FF:000001">
    <property type="entry name" value="50S ribosomal protein L20"/>
    <property type="match status" value="1"/>
</dbReference>
<dbReference type="Gene3D" id="6.10.160.10">
    <property type="match status" value="1"/>
</dbReference>
<dbReference type="Gene3D" id="1.10.1900.20">
    <property type="entry name" value="Ribosomal protein L20"/>
    <property type="match status" value="1"/>
</dbReference>
<dbReference type="HAMAP" id="MF_00382">
    <property type="entry name" value="Ribosomal_bL20"/>
    <property type="match status" value="1"/>
</dbReference>
<dbReference type="InterPro" id="IPR005813">
    <property type="entry name" value="Ribosomal_bL20"/>
</dbReference>
<dbReference type="InterPro" id="IPR049946">
    <property type="entry name" value="RIBOSOMAL_L20_CS"/>
</dbReference>
<dbReference type="InterPro" id="IPR035566">
    <property type="entry name" value="Ribosomal_protein_bL20_C"/>
</dbReference>
<dbReference type="NCBIfam" id="TIGR01032">
    <property type="entry name" value="rplT_bact"/>
    <property type="match status" value="1"/>
</dbReference>
<dbReference type="PANTHER" id="PTHR10986">
    <property type="entry name" value="39S RIBOSOMAL PROTEIN L20"/>
    <property type="match status" value="1"/>
</dbReference>
<dbReference type="Pfam" id="PF00453">
    <property type="entry name" value="Ribosomal_L20"/>
    <property type="match status" value="1"/>
</dbReference>
<dbReference type="PRINTS" id="PR00062">
    <property type="entry name" value="RIBOSOMALL20"/>
</dbReference>
<dbReference type="SUPFAM" id="SSF74731">
    <property type="entry name" value="Ribosomal protein L20"/>
    <property type="match status" value="1"/>
</dbReference>
<dbReference type="PROSITE" id="PS00937">
    <property type="entry name" value="RIBOSOMAL_L20"/>
    <property type="match status" value="1"/>
</dbReference>
<organism>
    <name type="scientific">Oceanobacillus iheyensis (strain DSM 14371 / CIP 107618 / JCM 11309 / KCTC 3954 / HTE831)</name>
    <dbReference type="NCBI Taxonomy" id="221109"/>
    <lineage>
        <taxon>Bacteria</taxon>
        <taxon>Bacillati</taxon>
        <taxon>Bacillota</taxon>
        <taxon>Bacilli</taxon>
        <taxon>Bacillales</taxon>
        <taxon>Bacillaceae</taxon>
        <taxon>Oceanobacillus</taxon>
    </lineage>
</organism>
<gene>
    <name evidence="1" type="primary">rplT</name>
    <name type="ordered locus">OB2150</name>
</gene>
<reference key="1">
    <citation type="journal article" date="2002" name="Nucleic Acids Res.">
        <title>Genome sequence of Oceanobacillus iheyensis isolated from the Iheya Ridge and its unexpected adaptive capabilities to extreme environments.</title>
        <authorList>
            <person name="Takami H."/>
            <person name="Takaki Y."/>
            <person name="Uchiyama I."/>
        </authorList>
    </citation>
    <scope>NUCLEOTIDE SEQUENCE [LARGE SCALE GENOMIC DNA]</scope>
    <source>
        <strain>DSM 14371 / CIP 107618 / JCM 11309 / KCTC 3954 / HTE831</strain>
    </source>
</reference>
<keyword id="KW-1185">Reference proteome</keyword>
<keyword id="KW-0687">Ribonucleoprotein</keyword>
<keyword id="KW-0689">Ribosomal protein</keyword>
<keyword id="KW-0694">RNA-binding</keyword>
<keyword id="KW-0699">rRNA-binding</keyword>
<comment type="function">
    <text evidence="1">Binds directly to 23S ribosomal RNA and is necessary for the in vitro assembly process of the 50S ribosomal subunit. It is not involved in the protein synthesizing functions of that subunit.</text>
</comment>
<comment type="similarity">
    <text evidence="1">Belongs to the bacterial ribosomal protein bL20 family.</text>
</comment>
<feature type="chain" id="PRO_0000177196" description="Large ribosomal subunit protein bL20">
    <location>
        <begin position="1"/>
        <end position="118"/>
    </location>
</feature>
<accession>Q8EPF7</accession>
<name>RL20_OCEIH</name>
<proteinExistence type="inferred from homology"/>